<feature type="chain" id="PRO_1000064436" description="Der GTPase-activating protein YihI">
    <location>
        <begin position="1"/>
        <end position="188"/>
    </location>
</feature>
<feature type="region of interest" description="Disordered" evidence="2">
    <location>
        <begin position="1"/>
        <end position="80"/>
    </location>
</feature>
<feature type="region of interest" description="Disordered" evidence="2">
    <location>
        <begin position="162"/>
        <end position="188"/>
    </location>
</feature>
<feature type="compositionally biased region" description="Basic and acidic residues" evidence="2">
    <location>
        <begin position="27"/>
        <end position="37"/>
    </location>
</feature>
<feature type="compositionally biased region" description="Polar residues" evidence="2">
    <location>
        <begin position="47"/>
        <end position="57"/>
    </location>
</feature>
<dbReference type="EMBL" id="CP000720">
    <property type="protein sequence ID" value="ABS48824.1"/>
    <property type="molecule type" value="Genomic_DNA"/>
</dbReference>
<dbReference type="RefSeq" id="WP_002213158.1">
    <property type="nucleotide sequence ID" value="NC_009708.1"/>
</dbReference>
<dbReference type="SMR" id="A7FCP6"/>
<dbReference type="GeneID" id="57974569"/>
<dbReference type="KEGG" id="ypi:YpsIP31758_0023"/>
<dbReference type="HOGENOM" id="CLU_094104_2_0_6"/>
<dbReference type="Proteomes" id="UP000002412">
    <property type="component" value="Chromosome"/>
</dbReference>
<dbReference type="GO" id="GO:0005096">
    <property type="term" value="F:GTPase activator activity"/>
    <property type="evidence" value="ECO:0007669"/>
    <property type="project" value="UniProtKB-KW"/>
</dbReference>
<dbReference type="GO" id="GO:0042254">
    <property type="term" value="P:ribosome biogenesis"/>
    <property type="evidence" value="ECO:0007669"/>
    <property type="project" value="UniProtKB-KW"/>
</dbReference>
<dbReference type="HAMAP" id="MF_01058">
    <property type="entry name" value="GAP_YihI"/>
    <property type="match status" value="1"/>
</dbReference>
<dbReference type="InterPro" id="IPR007336">
    <property type="entry name" value="YihI"/>
</dbReference>
<dbReference type="NCBIfam" id="NF003560">
    <property type="entry name" value="PRK05244.1-1"/>
    <property type="match status" value="1"/>
</dbReference>
<dbReference type="Pfam" id="PF04220">
    <property type="entry name" value="YihI"/>
    <property type="match status" value="1"/>
</dbReference>
<sequence>MKQPNKAPRANIAAPKGTATPKRRRKTRDELDAEARDRKRQKKHSGNRSGARTNVEGSNKKGHSQTQEKDPRVGSKVPVPLVIESQVKAKSMPKPVEKNVVKPRLTPEEELAKLENDERLDALLDRLDNDEVLNKEDQAYVDLTLDRIDALMEQLGIELGDDEDDVEREEKQEDILQLLKRGNPKDTF</sequence>
<gene>
    <name evidence="1" type="primary">yihI</name>
    <name type="ordered locus">YpsIP31758_0023</name>
</gene>
<proteinExistence type="inferred from homology"/>
<organism>
    <name type="scientific">Yersinia pseudotuberculosis serotype O:1b (strain IP 31758)</name>
    <dbReference type="NCBI Taxonomy" id="349747"/>
    <lineage>
        <taxon>Bacteria</taxon>
        <taxon>Pseudomonadati</taxon>
        <taxon>Pseudomonadota</taxon>
        <taxon>Gammaproteobacteria</taxon>
        <taxon>Enterobacterales</taxon>
        <taxon>Yersiniaceae</taxon>
        <taxon>Yersinia</taxon>
    </lineage>
</organism>
<keyword id="KW-0343">GTPase activation</keyword>
<keyword id="KW-0690">Ribosome biogenesis</keyword>
<evidence type="ECO:0000255" key="1">
    <source>
        <dbReference type="HAMAP-Rule" id="MF_01058"/>
    </source>
</evidence>
<evidence type="ECO:0000256" key="2">
    <source>
        <dbReference type="SAM" id="MobiDB-lite"/>
    </source>
</evidence>
<accession>A7FCP6</accession>
<comment type="function">
    <text evidence="1">A GTPase-activating protein (GAP) that modifies Der/EngA GTPase function. May play a role in ribosome biogenesis.</text>
</comment>
<comment type="subunit">
    <text evidence="1">Interacts with Der.</text>
</comment>
<comment type="similarity">
    <text evidence="1">Belongs to the YihI family.</text>
</comment>
<reference key="1">
    <citation type="journal article" date="2007" name="PLoS Genet.">
        <title>The complete genome sequence of Yersinia pseudotuberculosis IP31758, the causative agent of Far East scarlet-like fever.</title>
        <authorList>
            <person name="Eppinger M."/>
            <person name="Rosovitz M.J."/>
            <person name="Fricke W.F."/>
            <person name="Rasko D.A."/>
            <person name="Kokorina G."/>
            <person name="Fayolle C."/>
            <person name="Lindler L.E."/>
            <person name="Carniel E."/>
            <person name="Ravel J."/>
        </authorList>
    </citation>
    <scope>NUCLEOTIDE SEQUENCE [LARGE SCALE GENOMIC DNA]</scope>
    <source>
        <strain>IP 31758</strain>
    </source>
</reference>
<name>YIHI_YERP3</name>
<protein>
    <recommendedName>
        <fullName evidence="1">Der GTPase-activating protein YihI</fullName>
    </recommendedName>
</protein>